<feature type="chain" id="PRO_1000192923" description="Putative pterin-4-alpha-carbinolamine dehydratase">
    <location>
        <begin position="1"/>
        <end position="97"/>
    </location>
</feature>
<gene>
    <name type="ordered locus">Oter_1924</name>
</gene>
<reference key="1">
    <citation type="journal article" date="2011" name="J. Bacteriol.">
        <title>Genome sequence of the verrucomicrobium Opitutus terrae PB90-1, an abundant inhabitant of rice paddy soil ecosystems.</title>
        <authorList>
            <person name="van Passel M.W."/>
            <person name="Kant R."/>
            <person name="Palva A."/>
            <person name="Copeland A."/>
            <person name="Lucas S."/>
            <person name="Lapidus A."/>
            <person name="Glavina del Rio T."/>
            <person name="Pitluck S."/>
            <person name="Goltsman E."/>
            <person name="Clum A."/>
            <person name="Sun H."/>
            <person name="Schmutz J."/>
            <person name="Larimer F.W."/>
            <person name="Land M.L."/>
            <person name="Hauser L."/>
            <person name="Kyrpides N."/>
            <person name="Mikhailova N."/>
            <person name="Richardson P.P."/>
            <person name="Janssen P.H."/>
            <person name="de Vos W.M."/>
            <person name="Smidt H."/>
        </authorList>
    </citation>
    <scope>NUCLEOTIDE SEQUENCE [LARGE SCALE GENOMIC DNA]</scope>
    <source>
        <strain>DSM 11246 / JCM 15787 / PB90-1</strain>
    </source>
</reference>
<accession>B1ZY08</accession>
<comment type="catalytic activity">
    <reaction evidence="1">
        <text>(4aS,6R)-4a-hydroxy-L-erythro-5,6,7,8-tetrahydrobiopterin = (6R)-L-erythro-6,7-dihydrobiopterin + H2O</text>
        <dbReference type="Rhea" id="RHEA:11920"/>
        <dbReference type="ChEBI" id="CHEBI:15377"/>
        <dbReference type="ChEBI" id="CHEBI:15642"/>
        <dbReference type="ChEBI" id="CHEBI:43120"/>
        <dbReference type="EC" id="4.2.1.96"/>
    </reaction>
</comment>
<comment type="similarity">
    <text evidence="1">Belongs to the pterin-4-alpha-carbinolamine dehydratase family.</text>
</comment>
<name>PHS_OPITP</name>
<dbReference type="EC" id="4.2.1.96" evidence="1"/>
<dbReference type="EMBL" id="CP001032">
    <property type="protein sequence ID" value="ACB75207.1"/>
    <property type="molecule type" value="Genomic_DNA"/>
</dbReference>
<dbReference type="RefSeq" id="WP_012374744.1">
    <property type="nucleotide sequence ID" value="NC_010571.1"/>
</dbReference>
<dbReference type="SMR" id="B1ZY08"/>
<dbReference type="STRING" id="452637.Oter_1924"/>
<dbReference type="KEGG" id="ote:Oter_1924"/>
<dbReference type="eggNOG" id="COG2154">
    <property type="taxonomic scope" value="Bacteria"/>
</dbReference>
<dbReference type="HOGENOM" id="CLU_081974_3_2_0"/>
<dbReference type="OrthoDB" id="9800108at2"/>
<dbReference type="Proteomes" id="UP000007013">
    <property type="component" value="Chromosome"/>
</dbReference>
<dbReference type="GO" id="GO:0008124">
    <property type="term" value="F:4-alpha-hydroxytetrahydrobiopterin dehydratase activity"/>
    <property type="evidence" value="ECO:0007669"/>
    <property type="project" value="UniProtKB-UniRule"/>
</dbReference>
<dbReference type="GO" id="GO:0006729">
    <property type="term" value="P:tetrahydrobiopterin biosynthetic process"/>
    <property type="evidence" value="ECO:0007669"/>
    <property type="project" value="InterPro"/>
</dbReference>
<dbReference type="Gene3D" id="3.30.1360.20">
    <property type="entry name" value="Transcriptional coactivator/pterin dehydratase"/>
    <property type="match status" value="1"/>
</dbReference>
<dbReference type="HAMAP" id="MF_00434">
    <property type="entry name" value="Pterin_4_alpha"/>
    <property type="match status" value="1"/>
</dbReference>
<dbReference type="InterPro" id="IPR036428">
    <property type="entry name" value="PCD_sf"/>
</dbReference>
<dbReference type="InterPro" id="IPR001533">
    <property type="entry name" value="Pterin_deHydtase"/>
</dbReference>
<dbReference type="NCBIfam" id="NF002017">
    <property type="entry name" value="PRK00823.1-2"/>
    <property type="match status" value="1"/>
</dbReference>
<dbReference type="NCBIfam" id="NF002018">
    <property type="entry name" value="PRK00823.1-3"/>
    <property type="match status" value="1"/>
</dbReference>
<dbReference type="PANTHER" id="PTHR12599">
    <property type="entry name" value="PTERIN-4-ALPHA-CARBINOLAMINE DEHYDRATASE"/>
    <property type="match status" value="1"/>
</dbReference>
<dbReference type="PANTHER" id="PTHR12599:SF0">
    <property type="entry name" value="PTERIN-4-ALPHA-CARBINOLAMINE DEHYDRATASE"/>
    <property type="match status" value="1"/>
</dbReference>
<dbReference type="Pfam" id="PF01329">
    <property type="entry name" value="Pterin_4a"/>
    <property type="match status" value="1"/>
</dbReference>
<dbReference type="SUPFAM" id="SSF55248">
    <property type="entry name" value="PCD-like"/>
    <property type="match status" value="1"/>
</dbReference>
<evidence type="ECO:0000255" key="1">
    <source>
        <dbReference type="HAMAP-Rule" id="MF_00434"/>
    </source>
</evidence>
<proteinExistence type="inferred from homology"/>
<sequence>MPTILTQADIQQVLGELKGWAWERDALEKTYRFGSFREAMSFMVRAAFEAEALNHHPEWANVYDRVTVRLATHDAGGKVTAKDVELARRFEKISWVG</sequence>
<keyword id="KW-0456">Lyase</keyword>
<keyword id="KW-1185">Reference proteome</keyword>
<organism>
    <name type="scientific">Opitutus terrae (strain DSM 11246 / JCM 15787 / PB90-1)</name>
    <dbReference type="NCBI Taxonomy" id="452637"/>
    <lineage>
        <taxon>Bacteria</taxon>
        <taxon>Pseudomonadati</taxon>
        <taxon>Verrucomicrobiota</taxon>
        <taxon>Opitutia</taxon>
        <taxon>Opitutales</taxon>
        <taxon>Opitutaceae</taxon>
        <taxon>Opitutus</taxon>
    </lineage>
</organism>
<protein>
    <recommendedName>
        <fullName evidence="1">Putative pterin-4-alpha-carbinolamine dehydratase</fullName>
        <shortName evidence="1">PHS</shortName>
        <ecNumber evidence="1">4.2.1.96</ecNumber>
    </recommendedName>
    <alternativeName>
        <fullName evidence="1">4-alpha-hydroxy-tetrahydropterin dehydratase</fullName>
    </alternativeName>
    <alternativeName>
        <fullName evidence="1">Pterin carbinolamine dehydratase</fullName>
        <shortName evidence="1">PCD</shortName>
    </alternativeName>
</protein>